<protein>
    <recommendedName>
        <fullName evidence="1">Elongation factor 4</fullName>
        <shortName evidence="1">EF-4</shortName>
        <ecNumber evidence="1">3.6.5.n1</ecNumber>
    </recommendedName>
    <alternativeName>
        <fullName evidence="1">Ribosomal back-translocase LepA</fullName>
    </alternativeName>
</protein>
<feature type="chain" id="PRO_1000092459" description="Elongation factor 4">
    <location>
        <begin position="1"/>
        <end position="599"/>
    </location>
</feature>
<feature type="domain" description="tr-type G">
    <location>
        <begin position="4"/>
        <end position="186"/>
    </location>
</feature>
<feature type="binding site" evidence="1">
    <location>
        <begin position="16"/>
        <end position="21"/>
    </location>
    <ligand>
        <name>GTP</name>
        <dbReference type="ChEBI" id="CHEBI:37565"/>
    </ligand>
</feature>
<feature type="binding site" evidence="1">
    <location>
        <begin position="133"/>
        <end position="136"/>
    </location>
    <ligand>
        <name>GTP</name>
        <dbReference type="ChEBI" id="CHEBI:37565"/>
    </ligand>
</feature>
<keyword id="KW-1003">Cell membrane</keyword>
<keyword id="KW-0342">GTP-binding</keyword>
<keyword id="KW-0378">Hydrolase</keyword>
<keyword id="KW-0472">Membrane</keyword>
<keyword id="KW-0547">Nucleotide-binding</keyword>
<keyword id="KW-0648">Protein biosynthesis</keyword>
<comment type="function">
    <text evidence="1">Required for accurate and efficient protein synthesis under certain stress conditions. May act as a fidelity factor of the translation reaction, by catalyzing a one-codon backward translocation of tRNAs on improperly translocated ribosomes. Back-translocation proceeds from a post-translocation (POST) complex to a pre-translocation (PRE) complex, thus giving elongation factor G a second chance to translocate the tRNAs correctly. Binds to ribosomes in a GTP-dependent manner.</text>
</comment>
<comment type="catalytic activity">
    <reaction evidence="1">
        <text>GTP + H2O = GDP + phosphate + H(+)</text>
        <dbReference type="Rhea" id="RHEA:19669"/>
        <dbReference type="ChEBI" id="CHEBI:15377"/>
        <dbReference type="ChEBI" id="CHEBI:15378"/>
        <dbReference type="ChEBI" id="CHEBI:37565"/>
        <dbReference type="ChEBI" id="CHEBI:43474"/>
        <dbReference type="ChEBI" id="CHEBI:58189"/>
        <dbReference type="EC" id="3.6.5.n1"/>
    </reaction>
</comment>
<comment type="subcellular location">
    <subcellularLocation>
        <location evidence="1">Cell membrane</location>
        <topology evidence="1">Peripheral membrane protein</topology>
        <orientation evidence="1">Cytoplasmic side</orientation>
    </subcellularLocation>
</comment>
<comment type="similarity">
    <text evidence="1">Belongs to the TRAFAC class translation factor GTPase superfamily. Classic translation factor GTPase family. LepA subfamily.</text>
</comment>
<accession>B5ZBD4</accession>
<reference key="1">
    <citation type="submission" date="2008-10" db="EMBL/GenBank/DDBJ databases">
        <title>Genome sequence of Ureaplasma urealyticum serovar 10 ATCC-33699.</title>
        <authorList>
            <person name="Shrivastava S."/>
            <person name="Methe B.A."/>
            <person name="Glass J."/>
            <person name="White K."/>
            <person name="Duffy L.B."/>
        </authorList>
    </citation>
    <scope>NUCLEOTIDE SEQUENCE [LARGE SCALE GENOMIC DNA]</scope>
    <source>
        <strain>ATCC 33699 / Western</strain>
    </source>
</reference>
<sequence>MDKKFIRNFSIIAHIDHGKSTLSDRIIEFTNTLSKREMTNQILDSMDIERERGITIKLNAVQIKYHARDNNEYLIHLIDTPGHVDFTYEVSRSLAACEGAILVVDAAQGIEAQTLSNVYLALENNLEIVPTINKIDLPSADPERVKKEIEDVIGLDTSDIPLISAKTGLNIQDVLEAIIKHVPPPLDANDDAKLQALIFDSFYDSYKGVVCLVRIKQGTIKVGDKIRMMANNKDYIVSELGIRTPKIVNKTELVAGEVGWVAAAIKTVKDINVGDTITHANNPADKPLPGYKKILPMVYCGLYPIDTSQYDDLKEAMAKISLSDAALTYEYETSQALGFGIRCGFLGLLHMDVIRERIAREFNIELILTAPSVIYKIELTNNQEISIDSPAKMPEPTNIKAIKEPFVKLAIITPDNYVGAIMELCQSRRGSYQDLEVIDGTRRRLIYKMPLAEIMYSFFDSLKSITKGYATMDYELIGYQAEKLVKIDIMLNGNKVDALSIIAHRDFAYGKSKIICERLKEVIPKHQFEIPIQASIGSKIIARETIKAVRKDVIAKCYGGDVSRKKKLLEQQKEGKKRLKAIGNVDVPQDAFVKVLSEN</sequence>
<name>LEPA_UREU1</name>
<organism>
    <name type="scientific">Ureaplasma urealyticum serovar 10 (strain ATCC 33699 / Western)</name>
    <dbReference type="NCBI Taxonomy" id="565575"/>
    <lineage>
        <taxon>Bacteria</taxon>
        <taxon>Bacillati</taxon>
        <taxon>Mycoplasmatota</taxon>
        <taxon>Mycoplasmoidales</taxon>
        <taxon>Mycoplasmoidaceae</taxon>
        <taxon>Ureaplasma</taxon>
    </lineage>
</organism>
<proteinExistence type="inferred from homology"/>
<evidence type="ECO:0000255" key="1">
    <source>
        <dbReference type="HAMAP-Rule" id="MF_00071"/>
    </source>
</evidence>
<dbReference type="EC" id="3.6.5.n1" evidence="1"/>
<dbReference type="EMBL" id="CP001184">
    <property type="protein sequence ID" value="ACI60021.1"/>
    <property type="molecule type" value="Genomic_DNA"/>
</dbReference>
<dbReference type="RefSeq" id="WP_012560260.1">
    <property type="nucleotide sequence ID" value="NC_011374.1"/>
</dbReference>
<dbReference type="SMR" id="B5ZBD4"/>
<dbReference type="STRING" id="565575.UUR10_0331"/>
<dbReference type="KEGG" id="uue:UUR10_0331"/>
<dbReference type="eggNOG" id="COG0481">
    <property type="taxonomic scope" value="Bacteria"/>
</dbReference>
<dbReference type="HOGENOM" id="CLU_009995_3_3_14"/>
<dbReference type="OrthoDB" id="9804431at2"/>
<dbReference type="Proteomes" id="UP000002018">
    <property type="component" value="Chromosome"/>
</dbReference>
<dbReference type="GO" id="GO:0005886">
    <property type="term" value="C:plasma membrane"/>
    <property type="evidence" value="ECO:0007669"/>
    <property type="project" value="UniProtKB-SubCell"/>
</dbReference>
<dbReference type="GO" id="GO:0005525">
    <property type="term" value="F:GTP binding"/>
    <property type="evidence" value="ECO:0007669"/>
    <property type="project" value="UniProtKB-UniRule"/>
</dbReference>
<dbReference type="GO" id="GO:0003924">
    <property type="term" value="F:GTPase activity"/>
    <property type="evidence" value="ECO:0007669"/>
    <property type="project" value="UniProtKB-UniRule"/>
</dbReference>
<dbReference type="GO" id="GO:0043022">
    <property type="term" value="F:ribosome binding"/>
    <property type="evidence" value="ECO:0007669"/>
    <property type="project" value="UniProtKB-UniRule"/>
</dbReference>
<dbReference type="GO" id="GO:0003746">
    <property type="term" value="F:translation elongation factor activity"/>
    <property type="evidence" value="ECO:0007669"/>
    <property type="project" value="UniProtKB-UniRule"/>
</dbReference>
<dbReference type="GO" id="GO:0045727">
    <property type="term" value="P:positive regulation of translation"/>
    <property type="evidence" value="ECO:0007669"/>
    <property type="project" value="UniProtKB-UniRule"/>
</dbReference>
<dbReference type="CDD" id="cd03699">
    <property type="entry name" value="EF4_II"/>
    <property type="match status" value="1"/>
</dbReference>
<dbReference type="CDD" id="cd16260">
    <property type="entry name" value="EF4_III"/>
    <property type="match status" value="1"/>
</dbReference>
<dbReference type="CDD" id="cd01890">
    <property type="entry name" value="LepA"/>
    <property type="match status" value="1"/>
</dbReference>
<dbReference type="CDD" id="cd03709">
    <property type="entry name" value="lepA_C"/>
    <property type="match status" value="1"/>
</dbReference>
<dbReference type="FunFam" id="3.40.50.300:FF:000078">
    <property type="entry name" value="Elongation factor 4"/>
    <property type="match status" value="1"/>
</dbReference>
<dbReference type="FunFam" id="2.40.30.10:FF:000015">
    <property type="entry name" value="Translation factor GUF1, mitochondrial"/>
    <property type="match status" value="1"/>
</dbReference>
<dbReference type="FunFam" id="3.30.70.240:FF:000007">
    <property type="entry name" value="Translation factor GUF1, mitochondrial"/>
    <property type="match status" value="1"/>
</dbReference>
<dbReference type="FunFam" id="3.30.70.2570:FF:000001">
    <property type="entry name" value="Translation factor GUF1, mitochondrial"/>
    <property type="match status" value="1"/>
</dbReference>
<dbReference type="FunFam" id="3.30.70.870:FF:000004">
    <property type="entry name" value="Translation factor GUF1, mitochondrial"/>
    <property type="match status" value="1"/>
</dbReference>
<dbReference type="Gene3D" id="3.30.70.240">
    <property type="match status" value="1"/>
</dbReference>
<dbReference type="Gene3D" id="3.30.70.2570">
    <property type="entry name" value="Elongation factor 4, C-terminal domain"/>
    <property type="match status" value="1"/>
</dbReference>
<dbReference type="Gene3D" id="3.30.70.870">
    <property type="entry name" value="Elongation Factor G (Translational Gtpase), domain 3"/>
    <property type="match status" value="1"/>
</dbReference>
<dbReference type="Gene3D" id="3.40.50.300">
    <property type="entry name" value="P-loop containing nucleotide triphosphate hydrolases"/>
    <property type="match status" value="1"/>
</dbReference>
<dbReference type="Gene3D" id="2.40.30.10">
    <property type="entry name" value="Translation factors"/>
    <property type="match status" value="1"/>
</dbReference>
<dbReference type="HAMAP" id="MF_00071">
    <property type="entry name" value="LepA"/>
    <property type="match status" value="1"/>
</dbReference>
<dbReference type="InterPro" id="IPR006297">
    <property type="entry name" value="EF-4"/>
</dbReference>
<dbReference type="InterPro" id="IPR035647">
    <property type="entry name" value="EFG_III/V"/>
</dbReference>
<dbReference type="InterPro" id="IPR000640">
    <property type="entry name" value="EFG_V-like"/>
</dbReference>
<dbReference type="InterPro" id="IPR004161">
    <property type="entry name" value="EFTu-like_2"/>
</dbReference>
<dbReference type="InterPro" id="IPR031157">
    <property type="entry name" value="G_TR_CS"/>
</dbReference>
<dbReference type="InterPro" id="IPR038363">
    <property type="entry name" value="LepA_C_sf"/>
</dbReference>
<dbReference type="InterPro" id="IPR013842">
    <property type="entry name" value="LepA_CTD"/>
</dbReference>
<dbReference type="InterPro" id="IPR035654">
    <property type="entry name" value="LepA_IV"/>
</dbReference>
<dbReference type="InterPro" id="IPR027417">
    <property type="entry name" value="P-loop_NTPase"/>
</dbReference>
<dbReference type="InterPro" id="IPR005225">
    <property type="entry name" value="Small_GTP-bd"/>
</dbReference>
<dbReference type="InterPro" id="IPR000795">
    <property type="entry name" value="T_Tr_GTP-bd_dom"/>
</dbReference>
<dbReference type="InterPro" id="IPR009000">
    <property type="entry name" value="Transl_B-barrel_sf"/>
</dbReference>
<dbReference type="NCBIfam" id="TIGR01393">
    <property type="entry name" value="lepA"/>
    <property type="match status" value="1"/>
</dbReference>
<dbReference type="NCBIfam" id="TIGR00231">
    <property type="entry name" value="small_GTP"/>
    <property type="match status" value="1"/>
</dbReference>
<dbReference type="PANTHER" id="PTHR43512:SF4">
    <property type="entry name" value="TRANSLATION FACTOR GUF1 HOMOLOG, CHLOROPLASTIC"/>
    <property type="match status" value="1"/>
</dbReference>
<dbReference type="PANTHER" id="PTHR43512">
    <property type="entry name" value="TRANSLATION FACTOR GUF1-RELATED"/>
    <property type="match status" value="1"/>
</dbReference>
<dbReference type="Pfam" id="PF00679">
    <property type="entry name" value="EFG_C"/>
    <property type="match status" value="1"/>
</dbReference>
<dbReference type="Pfam" id="PF00009">
    <property type="entry name" value="GTP_EFTU"/>
    <property type="match status" value="1"/>
</dbReference>
<dbReference type="Pfam" id="PF03144">
    <property type="entry name" value="GTP_EFTU_D2"/>
    <property type="match status" value="1"/>
</dbReference>
<dbReference type="Pfam" id="PF06421">
    <property type="entry name" value="LepA_C"/>
    <property type="match status" value="1"/>
</dbReference>
<dbReference type="PRINTS" id="PR00315">
    <property type="entry name" value="ELONGATNFCT"/>
</dbReference>
<dbReference type="SMART" id="SM00838">
    <property type="entry name" value="EFG_C"/>
    <property type="match status" value="1"/>
</dbReference>
<dbReference type="SUPFAM" id="SSF54980">
    <property type="entry name" value="EF-G C-terminal domain-like"/>
    <property type="match status" value="2"/>
</dbReference>
<dbReference type="SUPFAM" id="SSF52540">
    <property type="entry name" value="P-loop containing nucleoside triphosphate hydrolases"/>
    <property type="match status" value="1"/>
</dbReference>
<dbReference type="SUPFAM" id="SSF50447">
    <property type="entry name" value="Translation proteins"/>
    <property type="match status" value="1"/>
</dbReference>
<dbReference type="PROSITE" id="PS00301">
    <property type="entry name" value="G_TR_1"/>
    <property type="match status" value="1"/>
</dbReference>
<dbReference type="PROSITE" id="PS51722">
    <property type="entry name" value="G_TR_2"/>
    <property type="match status" value="1"/>
</dbReference>
<gene>
    <name evidence="1" type="primary">lepA</name>
    <name type="ordered locus">UUR10_0331</name>
</gene>